<accession>A9W8G4</accession>
<sequence>MPLYEHVFLARQDVTAQQVETMVETYKGVIETGGGTIEKIESWGVKSLAYRIKKNRKAHFTLLNISAPPAAVAEMERQMQISEDVLRFMTVRVEQLEAEPSAMMQKRDRDDRKDRDRGDRPRRRDDDFGGGDRGDRGDRGDRPERNFGGEN</sequence>
<comment type="function">
    <text evidence="1">Binds together with bS18 to 16S ribosomal RNA.</text>
</comment>
<comment type="similarity">
    <text evidence="1">Belongs to the bacterial ribosomal protein bS6 family.</text>
</comment>
<proteinExistence type="inferred from homology"/>
<protein>
    <recommendedName>
        <fullName evidence="1">Small ribosomal subunit protein bS6</fullName>
    </recommendedName>
    <alternativeName>
        <fullName evidence="3">30S ribosomal protein S6</fullName>
    </alternativeName>
</protein>
<evidence type="ECO:0000255" key="1">
    <source>
        <dbReference type="HAMAP-Rule" id="MF_00360"/>
    </source>
</evidence>
<evidence type="ECO:0000256" key="2">
    <source>
        <dbReference type="SAM" id="MobiDB-lite"/>
    </source>
</evidence>
<evidence type="ECO:0000305" key="3"/>
<organism>
    <name type="scientific">Methylorubrum extorquens (strain PA1)</name>
    <name type="common">Methylobacterium extorquens</name>
    <dbReference type="NCBI Taxonomy" id="419610"/>
    <lineage>
        <taxon>Bacteria</taxon>
        <taxon>Pseudomonadati</taxon>
        <taxon>Pseudomonadota</taxon>
        <taxon>Alphaproteobacteria</taxon>
        <taxon>Hyphomicrobiales</taxon>
        <taxon>Methylobacteriaceae</taxon>
        <taxon>Methylorubrum</taxon>
    </lineage>
</organism>
<name>RS6_METEP</name>
<reference key="1">
    <citation type="submission" date="2007-12" db="EMBL/GenBank/DDBJ databases">
        <title>Complete sequence of Methylobacterium extorquens PA1.</title>
        <authorList>
            <consortium name="US DOE Joint Genome Institute"/>
            <person name="Copeland A."/>
            <person name="Lucas S."/>
            <person name="Lapidus A."/>
            <person name="Barry K."/>
            <person name="Glavina del Rio T."/>
            <person name="Dalin E."/>
            <person name="Tice H."/>
            <person name="Pitluck S."/>
            <person name="Saunders E."/>
            <person name="Brettin T."/>
            <person name="Bruce D."/>
            <person name="Detter J.C."/>
            <person name="Han C."/>
            <person name="Schmutz J."/>
            <person name="Larimer F."/>
            <person name="Land M."/>
            <person name="Hauser L."/>
            <person name="Kyrpides N."/>
            <person name="Kim E."/>
            <person name="Marx C."/>
            <person name="Richardson P."/>
        </authorList>
    </citation>
    <scope>NUCLEOTIDE SEQUENCE [LARGE SCALE GENOMIC DNA]</scope>
    <source>
        <strain>PA1</strain>
    </source>
</reference>
<keyword id="KW-0687">Ribonucleoprotein</keyword>
<keyword id="KW-0689">Ribosomal protein</keyword>
<keyword id="KW-0694">RNA-binding</keyword>
<keyword id="KW-0699">rRNA-binding</keyword>
<dbReference type="EMBL" id="CP000908">
    <property type="protein sequence ID" value="ABY32313.1"/>
    <property type="molecule type" value="Genomic_DNA"/>
</dbReference>
<dbReference type="RefSeq" id="WP_012255117.1">
    <property type="nucleotide sequence ID" value="NC_010172.1"/>
</dbReference>
<dbReference type="SMR" id="A9W8G4"/>
<dbReference type="GeneID" id="72991658"/>
<dbReference type="KEGG" id="mex:Mext_3942"/>
<dbReference type="eggNOG" id="COG0360">
    <property type="taxonomic scope" value="Bacteria"/>
</dbReference>
<dbReference type="HOGENOM" id="CLU_113441_2_0_5"/>
<dbReference type="BioCyc" id="MEXT419610:MEXT_RS19790-MONOMER"/>
<dbReference type="GO" id="GO:0022627">
    <property type="term" value="C:cytosolic small ribosomal subunit"/>
    <property type="evidence" value="ECO:0007669"/>
    <property type="project" value="TreeGrafter"/>
</dbReference>
<dbReference type="GO" id="GO:0070181">
    <property type="term" value="F:small ribosomal subunit rRNA binding"/>
    <property type="evidence" value="ECO:0007669"/>
    <property type="project" value="TreeGrafter"/>
</dbReference>
<dbReference type="GO" id="GO:0003735">
    <property type="term" value="F:structural constituent of ribosome"/>
    <property type="evidence" value="ECO:0007669"/>
    <property type="project" value="InterPro"/>
</dbReference>
<dbReference type="GO" id="GO:0006412">
    <property type="term" value="P:translation"/>
    <property type="evidence" value="ECO:0007669"/>
    <property type="project" value="UniProtKB-UniRule"/>
</dbReference>
<dbReference type="CDD" id="cd00473">
    <property type="entry name" value="bS6"/>
    <property type="match status" value="1"/>
</dbReference>
<dbReference type="Gene3D" id="3.30.70.60">
    <property type="match status" value="1"/>
</dbReference>
<dbReference type="HAMAP" id="MF_00360">
    <property type="entry name" value="Ribosomal_bS6"/>
    <property type="match status" value="1"/>
</dbReference>
<dbReference type="InterPro" id="IPR000529">
    <property type="entry name" value="Ribosomal_bS6"/>
</dbReference>
<dbReference type="InterPro" id="IPR035980">
    <property type="entry name" value="Ribosomal_bS6_sf"/>
</dbReference>
<dbReference type="InterPro" id="IPR020814">
    <property type="entry name" value="Ribosomal_S6_plastid/chlpt"/>
</dbReference>
<dbReference type="InterPro" id="IPR014717">
    <property type="entry name" value="Transl_elong_EF1B/ribsomal_bS6"/>
</dbReference>
<dbReference type="NCBIfam" id="TIGR00166">
    <property type="entry name" value="S6"/>
    <property type="match status" value="1"/>
</dbReference>
<dbReference type="PANTHER" id="PTHR21011">
    <property type="entry name" value="MITOCHONDRIAL 28S RIBOSOMAL PROTEIN S6"/>
    <property type="match status" value="1"/>
</dbReference>
<dbReference type="PANTHER" id="PTHR21011:SF1">
    <property type="entry name" value="SMALL RIBOSOMAL SUBUNIT PROTEIN BS6M"/>
    <property type="match status" value="1"/>
</dbReference>
<dbReference type="Pfam" id="PF01250">
    <property type="entry name" value="Ribosomal_S6"/>
    <property type="match status" value="1"/>
</dbReference>
<dbReference type="SUPFAM" id="SSF54995">
    <property type="entry name" value="Ribosomal protein S6"/>
    <property type="match status" value="1"/>
</dbReference>
<feature type="chain" id="PRO_1000120771" description="Small ribosomal subunit protein bS6">
    <location>
        <begin position="1"/>
        <end position="151"/>
    </location>
</feature>
<feature type="region of interest" description="Disordered" evidence="2">
    <location>
        <begin position="97"/>
        <end position="151"/>
    </location>
</feature>
<feature type="compositionally biased region" description="Basic and acidic residues" evidence="2">
    <location>
        <begin position="105"/>
        <end position="151"/>
    </location>
</feature>
<gene>
    <name evidence="1" type="primary">rpsF</name>
    <name type="ordered locus">Mext_3942</name>
</gene>